<accession>Q24W37</accession>
<proteinExistence type="inferred from homology"/>
<reference key="1">
    <citation type="journal article" date="2006" name="J. Bacteriol.">
        <title>Complete genome sequence of the dehalorespiring bacterium Desulfitobacterium hafniense Y51 and comparison with Dehalococcoides ethenogenes 195.</title>
        <authorList>
            <person name="Nonaka H."/>
            <person name="Keresztes G."/>
            <person name="Shinoda Y."/>
            <person name="Ikenaga Y."/>
            <person name="Abe M."/>
            <person name="Naito K."/>
            <person name="Inatomi K."/>
            <person name="Furukawa K."/>
            <person name="Inui M."/>
            <person name="Yukawa H."/>
        </authorList>
    </citation>
    <scope>NUCLEOTIDE SEQUENCE [LARGE SCALE GENOMIC DNA]</scope>
    <source>
        <strain>Y51</strain>
    </source>
</reference>
<sequence length="445" mass="50931">MQTLNKKVAVVTLGCPKNQVDSEIMTGHMMTKYQIVNEPEQADIIIINTCTFIESAKAESIDMILQMSQYKEEGQCQTLVATGCLAQRYGDELLAEIPELDGIMGTGNVAEILETLEEAEKSKVRRISAEAPAFIYDETMPRVRLSPKQYAYVKVAEGCDNYCTYCIIPHVRGHFRSRTQESILREVEAMASEGVKEVLLIAQDTTRYGKDRYGEYRLPSLIKEIARIEGIEWIRLMYCYPELFTDELITVMKETPKVCRYLDLPLQHAHDKVLAEMNRRGTIREAEGLIHKLRQEIPDIRLRTTMITGFPGETEEEFQAVVEFAKKIRFDRLGAFAYSQEESTPAAQREDQVPEEIRQQRRDQLMELQHDIAYEQQQRWVGQTLKVLIEEALPDQRWVGRSEGDAPEIDGVVYVDSPGELEIGDFVLVKITRADSYDLMGEVVQ</sequence>
<organism>
    <name type="scientific">Desulfitobacterium hafniense (strain Y51)</name>
    <dbReference type="NCBI Taxonomy" id="138119"/>
    <lineage>
        <taxon>Bacteria</taxon>
        <taxon>Bacillati</taxon>
        <taxon>Bacillota</taxon>
        <taxon>Clostridia</taxon>
        <taxon>Eubacteriales</taxon>
        <taxon>Desulfitobacteriaceae</taxon>
        <taxon>Desulfitobacterium</taxon>
    </lineage>
</organism>
<name>RIMO_DESHY</name>
<evidence type="ECO:0000255" key="1">
    <source>
        <dbReference type="HAMAP-Rule" id="MF_01865"/>
    </source>
</evidence>
<evidence type="ECO:0000255" key="2">
    <source>
        <dbReference type="PROSITE-ProRule" id="PRU01266"/>
    </source>
</evidence>
<comment type="function">
    <text evidence="1">Catalyzes the methylthiolation of an aspartic acid residue of ribosomal protein uS12.</text>
</comment>
<comment type="catalytic activity">
    <reaction evidence="1">
        <text>L-aspartate(89)-[ribosomal protein uS12]-hydrogen + (sulfur carrier)-SH + AH2 + 2 S-adenosyl-L-methionine = 3-methylsulfanyl-L-aspartate(89)-[ribosomal protein uS12]-hydrogen + (sulfur carrier)-H + 5'-deoxyadenosine + L-methionine + A + S-adenosyl-L-homocysteine + 2 H(+)</text>
        <dbReference type="Rhea" id="RHEA:37087"/>
        <dbReference type="Rhea" id="RHEA-COMP:10460"/>
        <dbReference type="Rhea" id="RHEA-COMP:10461"/>
        <dbReference type="Rhea" id="RHEA-COMP:14737"/>
        <dbReference type="Rhea" id="RHEA-COMP:14739"/>
        <dbReference type="ChEBI" id="CHEBI:13193"/>
        <dbReference type="ChEBI" id="CHEBI:15378"/>
        <dbReference type="ChEBI" id="CHEBI:17319"/>
        <dbReference type="ChEBI" id="CHEBI:17499"/>
        <dbReference type="ChEBI" id="CHEBI:29917"/>
        <dbReference type="ChEBI" id="CHEBI:29961"/>
        <dbReference type="ChEBI" id="CHEBI:57844"/>
        <dbReference type="ChEBI" id="CHEBI:57856"/>
        <dbReference type="ChEBI" id="CHEBI:59789"/>
        <dbReference type="ChEBI" id="CHEBI:64428"/>
        <dbReference type="ChEBI" id="CHEBI:73599"/>
        <dbReference type="EC" id="2.8.4.4"/>
    </reaction>
</comment>
<comment type="cofactor">
    <cofactor evidence="1">
        <name>[4Fe-4S] cluster</name>
        <dbReference type="ChEBI" id="CHEBI:49883"/>
    </cofactor>
    <text evidence="1">Binds 2 [4Fe-4S] clusters. One cluster is coordinated with 3 cysteines and an exchangeable S-adenosyl-L-methionine.</text>
</comment>
<comment type="subcellular location">
    <subcellularLocation>
        <location evidence="1">Cytoplasm</location>
    </subcellularLocation>
</comment>
<comment type="similarity">
    <text evidence="1">Belongs to the methylthiotransferase family. RimO subfamily.</text>
</comment>
<feature type="chain" id="PRO_0000374802" description="Ribosomal protein uS12 methylthiotransferase RimO">
    <location>
        <begin position="1"/>
        <end position="445"/>
    </location>
</feature>
<feature type="domain" description="MTTase N-terminal" evidence="1">
    <location>
        <begin position="6"/>
        <end position="121"/>
    </location>
</feature>
<feature type="domain" description="Radical SAM core" evidence="2">
    <location>
        <begin position="145"/>
        <end position="375"/>
    </location>
</feature>
<feature type="domain" description="TRAM" evidence="1">
    <location>
        <begin position="378"/>
        <end position="445"/>
    </location>
</feature>
<feature type="binding site" evidence="1">
    <location>
        <position position="15"/>
    </location>
    <ligand>
        <name>[4Fe-4S] cluster</name>
        <dbReference type="ChEBI" id="CHEBI:49883"/>
        <label>1</label>
    </ligand>
</feature>
<feature type="binding site" evidence="1">
    <location>
        <position position="50"/>
    </location>
    <ligand>
        <name>[4Fe-4S] cluster</name>
        <dbReference type="ChEBI" id="CHEBI:49883"/>
        <label>1</label>
    </ligand>
</feature>
<feature type="binding site" evidence="1">
    <location>
        <position position="84"/>
    </location>
    <ligand>
        <name>[4Fe-4S] cluster</name>
        <dbReference type="ChEBI" id="CHEBI:49883"/>
        <label>1</label>
    </ligand>
</feature>
<feature type="binding site" evidence="1">
    <location>
        <position position="159"/>
    </location>
    <ligand>
        <name>[4Fe-4S] cluster</name>
        <dbReference type="ChEBI" id="CHEBI:49883"/>
        <label>2</label>
        <note>4Fe-4S-S-AdoMet</note>
    </ligand>
</feature>
<feature type="binding site" evidence="1">
    <location>
        <position position="163"/>
    </location>
    <ligand>
        <name>[4Fe-4S] cluster</name>
        <dbReference type="ChEBI" id="CHEBI:49883"/>
        <label>2</label>
        <note>4Fe-4S-S-AdoMet</note>
    </ligand>
</feature>
<feature type="binding site" evidence="1">
    <location>
        <position position="166"/>
    </location>
    <ligand>
        <name>[4Fe-4S] cluster</name>
        <dbReference type="ChEBI" id="CHEBI:49883"/>
        <label>2</label>
        <note>4Fe-4S-S-AdoMet</note>
    </ligand>
</feature>
<dbReference type="EC" id="2.8.4.4" evidence="1"/>
<dbReference type="EMBL" id="AP008230">
    <property type="protein sequence ID" value="BAE83755.1"/>
    <property type="molecule type" value="Genomic_DNA"/>
</dbReference>
<dbReference type="SMR" id="Q24W37"/>
<dbReference type="STRING" id="138119.DSY1966"/>
<dbReference type="KEGG" id="dsy:DSY1966"/>
<dbReference type="eggNOG" id="COG0621">
    <property type="taxonomic scope" value="Bacteria"/>
</dbReference>
<dbReference type="HOGENOM" id="CLU_018697_0_1_9"/>
<dbReference type="Proteomes" id="UP000001946">
    <property type="component" value="Chromosome"/>
</dbReference>
<dbReference type="GO" id="GO:0005829">
    <property type="term" value="C:cytosol"/>
    <property type="evidence" value="ECO:0007669"/>
    <property type="project" value="TreeGrafter"/>
</dbReference>
<dbReference type="GO" id="GO:0051539">
    <property type="term" value="F:4 iron, 4 sulfur cluster binding"/>
    <property type="evidence" value="ECO:0007669"/>
    <property type="project" value="UniProtKB-UniRule"/>
</dbReference>
<dbReference type="GO" id="GO:0035599">
    <property type="term" value="F:aspartic acid methylthiotransferase activity"/>
    <property type="evidence" value="ECO:0007669"/>
    <property type="project" value="TreeGrafter"/>
</dbReference>
<dbReference type="GO" id="GO:0046872">
    <property type="term" value="F:metal ion binding"/>
    <property type="evidence" value="ECO:0007669"/>
    <property type="project" value="UniProtKB-KW"/>
</dbReference>
<dbReference type="GO" id="GO:0103039">
    <property type="term" value="F:protein methylthiotransferase activity"/>
    <property type="evidence" value="ECO:0007669"/>
    <property type="project" value="UniProtKB-EC"/>
</dbReference>
<dbReference type="GO" id="GO:0006400">
    <property type="term" value="P:tRNA modification"/>
    <property type="evidence" value="ECO:0007669"/>
    <property type="project" value="InterPro"/>
</dbReference>
<dbReference type="CDD" id="cd01335">
    <property type="entry name" value="Radical_SAM"/>
    <property type="match status" value="1"/>
</dbReference>
<dbReference type="FunFam" id="2.40.50.140:FF:000210">
    <property type="entry name" value="Ribosomal protein S12 methylthiotransferase RimO"/>
    <property type="match status" value="1"/>
</dbReference>
<dbReference type="FunFam" id="3.80.30.20:FF:000001">
    <property type="entry name" value="tRNA-2-methylthio-N(6)-dimethylallyladenosine synthase 2"/>
    <property type="match status" value="1"/>
</dbReference>
<dbReference type="Gene3D" id="3.40.50.12160">
    <property type="entry name" value="Methylthiotransferase, N-terminal domain"/>
    <property type="match status" value="1"/>
</dbReference>
<dbReference type="Gene3D" id="2.40.50.140">
    <property type="entry name" value="Nucleic acid-binding proteins"/>
    <property type="match status" value="1"/>
</dbReference>
<dbReference type="Gene3D" id="3.80.30.20">
    <property type="entry name" value="tm_1862 like domain"/>
    <property type="match status" value="1"/>
</dbReference>
<dbReference type="HAMAP" id="MF_01865">
    <property type="entry name" value="MTTase_RimO"/>
    <property type="match status" value="1"/>
</dbReference>
<dbReference type="InterPro" id="IPR006638">
    <property type="entry name" value="Elp3/MiaA/NifB-like_rSAM"/>
</dbReference>
<dbReference type="InterPro" id="IPR005839">
    <property type="entry name" value="Methylthiotransferase"/>
</dbReference>
<dbReference type="InterPro" id="IPR020612">
    <property type="entry name" value="Methylthiotransferase_CS"/>
</dbReference>
<dbReference type="InterPro" id="IPR013848">
    <property type="entry name" value="Methylthiotransferase_N"/>
</dbReference>
<dbReference type="InterPro" id="IPR038135">
    <property type="entry name" value="Methylthiotransferase_N_sf"/>
</dbReference>
<dbReference type="InterPro" id="IPR012340">
    <property type="entry name" value="NA-bd_OB-fold"/>
</dbReference>
<dbReference type="InterPro" id="IPR005840">
    <property type="entry name" value="Ribosomal_uS12_MeSTrfase_RimO"/>
</dbReference>
<dbReference type="InterPro" id="IPR007197">
    <property type="entry name" value="rSAM"/>
</dbReference>
<dbReference type="InterPro" id="IPR023404">
    <property type="entry name" value="rSAM_horseshoe"/>
</dbReference>
<dbReference type="InterPro" id="IPR002792">
    <property type="entry name" value="TRAM_dom"/>
</dbReference>
<dbReference type="NCBIfam" id="TIGR01125">
    <property type="entry name" value="30S ribosomal protein S12 methylthiotransferase RimO"/>
    <property type="match status" value="1"/>
</dbReference>
<dbReference type="NCBIfam" id="TIGR00089">
    <property type="entry name" value="MiaB/RimO family radical SAM methylthiotransferase"/>
    <property type="match status" value="1"/>
</dbReference>
<dbReference type="PANTHER" id="PTHR43837">
    <property type="entry name" value="RIBOSOMAL PROTEIN S12 METHYLTHIOTRANSFERASE RIMO"/>
    <property type="match status" value="1"/>
</dbReference>
<dbReference type="PANTHER" id="PTHR43837:SF1">
    <property type="entry name" value="RIBOSOMAL PROTEIN US12 METHYLTHIOTRANSFERASE RIMO"/>
    <property type="match status" value="1"/>
</dbReference>
<dbReference type="Pfam" id="PF04055">
    <property type="entry name" value="Radical_SAM"/>
    <property type="match status" value="1"/>
</dbReference>
<dbReference type="Pfam" id="PF18693">
    <property type="entry name" value="TRAM_2"/>
    <property type="match status" value="1"/>
</dbReference>
<dbReference type="Pfam" id="PF00919">
    <property type="entry name" value="UPF0004"/>
    <property type="match status" value="1"/>
</dbReference>
<dbReference type="SFLD" id="SFLDG01082">
    <property type="entry name" value="B12-binding_domain_containing"/>
    <property type="match status" value="1"/>
</dbReference>
<dbReference type="SFLD" id="SFLDG01061">
    <property type="entry name" value="methylthiotransferase"/>
    <property type="match status" value="1"/>
</dbReference>
<dbReference type="SFLD" id="SFLDF00274">
    <property type="entry name" value="ribosomal_protein_S12_methylth"/>
    <property type="match status" value="1"/>
</dbReference>
<dbReference type="SMART" id="SM00729">
    <property type="entry name" value="Elp3"/>
    <property type="match status" value="1"/>
</dbReference>
<dbReference type="SUPFAM" id="SSF102114">
    <property type="entry name" value="Radical SAM enzymes"/>
    <property type="match status" value="1"/>
</dbReference>
<dbReference type="PROSITE" id="PS51449">
    <property type="entry name" value="MTTASE_N"/>
    <property type="match status" value="1"/>
</dbReference>
<dbReference type="PROSITE" id="PS01278">
    <property type="entry name" value="MTTASE_RADICAL"/>
    <property type="match status" value="1"/>
</dbReference>
<dbReference type="PROSITE" id="PS51918">
    <property type="entry name" value="RADICAL_SAM"/>
    <property type="match status" value="1"/>
</dbReference>
<dbReference type="PROSITE" id="PS50926">
    <property type="entry name" value="TRAM"/>
    <property type="match status" value="1"/>
</dbReference>
<gene>
    <name evidence="1" type="primary">rimO</name>
    <name type="ordered locus">DSY1966</name>
</gene>
<protein>
    <recommendedName>
        <fullName evidence="1">Ribosomal protein uS12 methylthiotransferase RimO</fullName>
        <shortName evidence="1">uS12 MTTase</shortName>
        <shortName evidence="1">uS12 methylthiotransferase</shortName>
        <ecNumber evidence="1">2.8.4.4</ecNumber>
    </recommendedName>
    <alternativeName>
        <fullName evidence="1">Ribosomal protein uS12 (aspartate-C(3))-methylthiotransferase</fullName>
    </alternativeName>
    <alternativeName>
        <fullName evidence="1">Ribosome maturation factor RimO</fullName>
    </alternativeName>
</protein>
<keyword id="KW-0004">4Fe-4S</keyword>
<keyword id="KW-0963">Cytoplasm</keyword>
<keyword id="KW-0408">Iron</keyword>
<keyword id="KW-0411">Iron-sulfur</keyword>
<keyword id="KW-0479">Metal-binding</keyword>
<keyword id="KW-1185">Reference proteome</keyword>
<keyword id="KW-0949">S-adenosyl-L-methionine</keyword>
<keyword id="KW-0808">Transferase</keyword>